<protein>
    <recommendedName>
        <fullName evidence="1">Protein GrpE</fullName>
    </recommendedName>
    <alternativeName>
        <fullName evidence="1">HSP-70 cofactor</fullName>
    </alternativeName>
</protein>
<keyword id="KW-0143">Chaperone</keyword>
<keyword id="KW-0963">Cytoplasm</keyword>
<keyword id="KW-0346">Stress response</keyword>
<evidence type="ECO:0000255" key="1">
    <source>
        <dbReference type="HAMAP-Rule" id="MF_01151"/>
    </source>
</evidence>
<evidence type="ECO:0000256" key="2">
    <source>
        <dbReference type="SAM" id="MobiDB-lite"/>
    </source>
</evidence>
<feature type="chain" id="PRO_1000137529" description="Protein GrpE">
    <location>
        <begin position="1"/>
        <end position="178"/>
    </location>
</feature>
<feature type="region of interest" description="Disordered" evidence="2">
    <location>
        <begin position="1"/>
        <end position="23"/>
    </location>
</feature>
<feature type="compositionally biased region" description="Pro residues" evidence="2">
    <location>
        <begin position="1"/>
        <end position="11"/>
    </location>
</feature>
<proteinExistence type="inferred from homology"/>
<name>GRPE_ACISJ</name>
<dbReference type="EMBL" id="CP000539">
    <property type="protein sequence ID" value="ABM43340.1"/>
    <property type="molecule type" value="Genomic_DNA"/>
</dbReference>
<dbReference type="SMR" id="A1WAR5"/>
<dbReference type="STRING" id="232721.Ajs_3217"/>
<dbReference type="KEGG" id="ajs:Ajs_3217"/>
<dbReference type="eggNOG" id="COG0576">
    <property type="taxonomic scope" value="Bacteria"/>
</dbReference>
<dbReference type="HOGENOM" id="CLU_057217_6_1_4"/>
<dbReference type="Proteomes" id="UP000000645">
    <property type="component" value="Chromosome"/>
</dbReference>
<dbReference type="GO" id="GO:0005829">
    <property type="term" value="C:cytosol"/>
    <property type="evidence" value="ECO:0007669"/>
    <property type="project" value="TreeGrafter"/>
</dbReference>
<dbReference type="GO" id="GO:0000774">
    <property type="term" value="F:adenyl-nucleotide exchange factor activity"/>
    <property type="evidence" value="ECO:0007669"/>
    <property type="project" value="InterPro"/>
</dbReference>
<dbReference type="GO" id="GO:0042803">
    <property type="term" value="F:protein homodimerization activity"/>
    <property type="evidence" value="ECO:0007669"/>
    <property type="project" value="InterPro"/>
</dbReference>
<dbReference type="GO" id="GO:0051087">
    <property type="term" value="F:protein-folding chaperone binding"/>
    <property type="evidence" value="ECO:0007669"/>
    <property type="project" value="InterPro"/>
</dbReference>
<dbReference type="GO" id="GO:0051082">
    <property type="term" value="F:unfolded protein binding"/>
    <property type="evidence" value="ECO:0007669"/>
    <property type="project" value="TreeGrafter"/>
</dbReference>
<dbReference type="GO" id="GO:0006457">
    <property type="term" value="P:protein folding"/>
    <property type="evidence" value="ECO:0007669"/>
    <property type="project" value="InterPro"/>
</dbReference>
<dbReference type="CDD" id="cd00446">
    <property type="entry name" value="GrpE"/>
    <property type="match status" value="1"/>
</dbReference>
<dbReference type="FunFam" id="2.30.22.10:FF:000001">
    <property type="entry name" value="Protein GrpE"/>
    <property type="match status" value="1"/>
</dbReference>
<dbReference type="Gene3D" id="3.90.20.20">
    <property type="match status" value="1"/>
</dbReference>
<dbReference type="Gene3D" id="2.30.22.10">
    <property type="entry name" value="Head domain of nucleotide exchange factor GrpE"/>
    <property type="match status" value="1"/>
</dbReference>
<dbReference type="HAMAP" id="MF_01151">
    <property type="entry name" value="GrpE"/>
    <property type="match status" value="1"/>
</dbReference>
<dbReference type="InterPro" id="IPR000740">
    <property type="entry name" value="GrpE"/>
</dbReference>
<dbReference type="InterPro" id="IPR013805">
    <property type="entry name" value="GrpE_coiled_coil"/>
</dbReference>
<dbReference type="InterPro" id="IPR009012">
    <property type="entry name" value="GrpE_head"/>
</dbReference>
<dbReference type="NCBIfam" id="NF010737">
    <property type="entry name" value="PRK14139.1"/>
    <property type="match status" value="1"/>
</dbReference>
<dbReference type="NCBIfam" id="NF010738">
    <property type="entry name" value="PRK14140.1"/>
    <property type="match status" value="1"/>
</dbReference>
<dbReference type="PANTHER" id="PTHR21237">
    <property type="entry name" value="GRPE PROTEIN"/>
    <property type="match status" value="1"/>
</dbReference>
<dbReference type="PANTHER" id="PTHR21237:SF23">
    <property type="entry name" value="GRPE PROTEIN HOMOLOG, MITOCHONDRIAL"/>
    <property type="match status" value="1"/>
</dbReference>
<dbReference type="Pfam" id="PF01025">
    <property type="entry name" value="GrpE"/>
    <property type="match status" value="1"/>
</dbReference>
<dbReference type="PRINTS" id="PR00773">
    <property type="entry name" value="GRPEPROTEIN"/>
</dbReference>
<dbReference type="SUPFAM" id="SSF58014">
    <property type="entry name" value="Coiled-coil domain of nucleotide exchange factor GrpE"/>
    <property type="match status" value="1"/>
</dbReference>
<dbReference type="SUPFAM" id="SSF51064">
    <property type="entry name" value="Head domain of nucleotide exchange factor GrpE"/>
    <property type="match status" value="1"/>
</dbReference>
<dbReference type="PROSITE" id="PS01071">
    <property type="entry name" value="GRPE"/>
    <property type="match status" value="1"/>
</dbReference>
<organism>
    <name type="scientific">Acidovorax sp. (strain JS42)</name>
    <dbReference type="NCBI Taxonomy" id="232721"/>
    <lineage>
        <taxon>Bacteria</taxon>
        <taxon>Pseudomonadati</taxon>
        <taxon>Pseudomonadota</taxon>
        <taxon>Betaproteobacteria</taxon>
        <taxon>Burkholderiales</taxon>
        <taxon>Comamonadaceae</taxon>
        <taxon>Acidovorax</taxon>
    </lineage>
</organism>
<gene>
    <name evidence="1" type="primary">grpE</name>
    <name type="ordered locus">Ajs_3217</name>
</gene>
<comment type="function">
    <text evidence="1">Participates actively in the response to hyperosmotic and heat shock by preventing the aggregation of stress-denatured proteins, in association with DnaK and GrpE. It is the nucleotide exchange factor for DnaK and may function as a thermosensor. Unfolded proteins bind initially to DnaJ; upon interaction with the DnaJ-bound protein, DnaK hydrolyzes its bound ATP, resulting in the formation of a stable complex. GrpE releases ADP from DnaK; ATP binding to DnaK triggers the release of the substrate protein, thus completing the reaction cycle. Several rounds of ATP-dependent interactions between DnaJ, DnaK and GrpE are required for fully efficient folding.</text>
</comment>
<comment type="subunit">
    <text evidence="1">Homodimer.</text>
</comment>
<comment type="subcellular location">
    <subcellularLocation>
        <location evidence="1">Cytoplasm</location>
    </subcellularLocation>
</comment>
<comment type="similarity">
    <text evidence="1">Belongs to the GrpE family.</text>
</comment>
<sequence length="178" mass="19304">MSENQNPPPSPEEIEAAMSANAADELNRLQGELAELKAKSADLADQFLRAKAEAENARRRAEDEVAKARKFGIESFAESLLPVCDSLDAALAIENATAEQLREGSDATLRQLMSALERNKVVIVNPEAGTKFDPHQHQAISMVPADQEANTVVSVLQKGYLIFDRVLRPALVTVAAPK</sequence>
<accession>A1WAR5</accession>
<reference key="1">
    <citation type="submission" date="2006-12" db="EMBL/GenBank/DDBJ databases">
        <title>Complete sequence of chromosome 1 of Acidovorax sp. JS42.</title>
        <authorList>
            <person name="Copeland A."/>
            <person name="Lucas S."/>
            <person name="Lapidus A."/>
            <person name="Barry K."/>
            <person name="Detter J.C."/>
            <person name="Glavina del Rio T."/>
            <person name="Dalin E."/>
            <person name="Tice H."/>
            <person name="Pitluck S."/>
            <person name="Chertkov O."/>
            <person name="Brettin T."/>
            <person name="Bruce D."/>
            <person name="Han C."/>
            <person name="Tapia R."/>
            <person name="Gilna P."/>
            <person name="Schmutz J."/>
            <person name="Larimer F."/>
            <person name="Land M."/>
            <person name="Hauser L."/>
            <person name="Kyrpides N."/>
            <person name="Kim E."/>
            <person name="Stahl D."/>
            <person name="Richardson P."/>
        </authorList>
    </citation>
    <scope>NUCLEOTIDE SEQUENCE [LARGE SCALE GENOMIC DNA]</scope>
    <source>
        <strain>JS42</strain>
    </source>
</reference>